<comment type="similarity">
    <text evidence="1">Belongs to the UPF0502 family.</text>
</comment>
<organism>
    <name type="scientific">Azotobacter vinelandii (strain DJ / ATCC BAA-1303)</name>
    <dbReference type="NCBI Taxonomy" id="322710"/>
    <lineage>
        <taxon>Bacteria</taxon>
        <taxon>Pseudomonadati</taxon>
        <taxon>Pseudomonadota</taxon>
        <taxon>Gammaproteobacteria</taxon>
        <taxon>Pseudomonadales</taxon>
        <taxon>Pseudomonadaceae</taxon>
        <taxon>Azotobacter</taxon>
    </lineage>
</organism>
<gene>
    <name type="ordered locus">Avin_04790</name>
</gene>
<reference key="1">
    <citation type="journal article" date="2009" name="J. Bacteriol.">
        <title>Genome sequence of Azotobacter vinelandii, an obligate aerobe specialized to support diverse anaerobic metabolic processes.</title>
        <authorList>
            <person name="Setubal J.C."/>
            <person name="Dos Santos P."/>
            <person name="Goldman B.S."/>
            <person name="Ertesvaag H."/>
            <person name="Espin G."/>
            <person name="Rubio L.M."/>
            <person name="Valla S."/>
            <person name="Almeida N.F."/>
            <person name="Balasubramanian D."/>
            <person name="Cromes L."/>
            <person name="Curatti L."/>
            <person name="Du Z."/>
            <person name="Godsy E."/>
            <person name="Goodner B."/>
            <person name="Hellner-Burris K."/>
            <person name="Hernandez J.A."/>
            <person name="Houmiel K."/>
            <person name="Imperial J."/>
            <person name="Kennedy C."/>
            <person name="Larson T.J."/>
            <person name="Latreille P."/>
            <person name="Ligon L.S."/>
            <person name="Lu J."/>
            <person name="Maerk M."/>
            <person name="Miller N.M."/>
            <person name="Norton S."/>
            <person name="O'Carroll I.P."/>
            <person name="Paulsen I."/>
            <person name="Raulfs E.C."/>
            <person name="Roemer R."/>
            <person name="Rosser J."/>
            <person name="Segura D."/>
            <person name="Slater S."/>
            <person name="Stricklin S.L."/>
            <person name="Studholme D.J."/>
            <person name="Sun J."/>
            <person name="Viana C.J."/>
            <person name="Wallin E."/>
            <person name="Wang B."/>
            <person name="Wheeler C."/>
            <person name="Zhu H."/>
            <person name="Dean D.R."/>
            <person name="Dixon R."/>
            <person name="Wood D."/>
        </authorList>
    </citation>
    <scope>NUCLEOTIDE SEQUENCE [LARGE SCALE GENOMIC DNA]</scope>
    <source>
        <strain>DJ / ATCC BAA-1303</strain>
    </source>
</reference>
<feature type="chain" id="PRO_1000215625" description="UPF0502 protein Avin_04790">
    <location>
        <begin position="1"/>
        <end position="223"/>
    </location>
</feature>
<name>Y479_AZOVD</name>
<accession>C1DJE8</accession>
<proteinExistence type="inferred from homology"/>
<evidence type="ECO:0000255" key="1">
    <source>
        <dbReference type="HAMAP-Rule" id="MF_01584"/>
    </source>
</evidence>
<dbReference type="EMBL" id="CP001157">
    <property type="protein sequence ID" value="ACO76733.1"/>
    <property type="molecule type" value="Genomic_DNA"/>
</dbReference>
<dbReference type="RefSeq" id="WP_012699161.1">
    <property type="nucleotide sequence ID" value="NC_012560.1"/>
</dbReference>
<dbReference type="SMR" id="C1DJE8"/>
<dbReference type="STRING" id="322710.Avin_04790"/>
<dbReference type="EnsemblBacteria" id="ACO76733">
    <property type="protein sequence ID" value="ACO76733"/>
    <property type="gene ID" value="Avin_04790"/>
</dbReference>
<dbReference type="GeneID" id="88183907"/>
<dbReference type="KEGG" id="avn:Avin_04790"/>
<dbReference type="eggNOG" id="COG3132">
    <property type="taxonomic scope" value="Bacteria"/>
</dbReference>
<dbReference type="HOGENOM" id="CLU_057831_2_0_6"/>
<dbReference type="OrthoDB" id="9784785at2"/>
<dbReference type="Proteomes" id="UP000002424">
    <property type="component" value="Chromosome"/>
</dbReference>
<dbReference type="Gene3D" id="1.10.10.10">
    <property type="entry name" value="Winged helix-like DNA-binding domain superfamily/Winged helix DNA-binding domain"/>
    <property type="match status" value="2"/>
</dbReference>
<dbReference type="HAMAP" id="MF_01584">
    <property type="entry name" value="UPF0502"/>
    <property type="match status" value="1"/>
</dbReference>
<dbReference type="InterPro" id="IPR007432">
    <property type="entry name" value="DUF480"/>
</dbReference>
<dbReference type="InterPro" id="IPR036388">
    <property type="entry name" value="WH-like_DNA-bd_sf"/>
</dbReference>
<dbReference type="InterPro" id="IPR036390">
    <property type="entry name" value="WH_DNA-bd_sf"/>
</dbReference>
<dbReference type="PANTHER" id="PTHR38768">
    <property type="entry name" value="UPF0502 PROTEIN YCEH"/>
    <property type="match status" value="1"/>
</dbReference>
<dbReference type="PANTHER" id="PTHR38768:SF1">
    <property type="entry name" value="UPF0502 PROTEIN YCEH"/>
    <property type="match status" value="1"/>
</dbReference>
<dbReference type="Pfam" id="PF04337">
    <property type="entry name" value="DUF480"/>
    <property type="match status" value="1"/>
</dbReference>
<dbReference type="SUPFAM" id="SSF46785">
    <property type="entry name" value="Winged helix' DNA-binding domain"/>
    <property type="match status" value="2"/>
</dbReference>
<sequence length="223" mass="24735">MSDRAETPSVREPFNAIEVRILGCLIEKQATTPESYPLTLNALVLACNQKSSREPLMNLASGQVGQGLRQLEGRSLVELVMGSRADRWEHRLDKALQLTPPQLSLLGLLLLRGPQTVNELLTRSARLYAFDDGEELQHQLERLIGRELVCRLPRQPGQREERYMHRLGSAEDLEELLAARATQAAVNEGAAGGRIEALEARIAELETRLAKLEEDLGSGEPRG</sequence>
<protein>
    <recommendedName>
        <fullName evidence="1">UPF0502 protein Avin_04790</fullName>
    </recommendedName>
</protein>